<protein>
    <recommendedName>
        <fullName evidence="1">Acyl carrier protein phosphodiesterase</fullName>
        <shortName evidence="1">ACP phosphodiesterase</shortName>
        <ecNumber evidence="1">3.1.4.14</ecNumber>
    </recommendedName>
</protein>
<proteinExistence type="inferred from homology"/>
<comment type="function">
    <text evidence="1">Converts holo-ACP to apo-ACP by hydrolytic cleavage of the phosphopantetheine prosthetic group from ACP.</text>
</comment>
<comment type="catalytic activity">
    <reaction evidence="1">
        <text>holo-[ACP] + H2O = apo-[ACP] + (R)-4'-phosphopantetheine + H(+)</text>
        <dbReference type="Rhea" id="RHEA:20537"/>
        <dbReference type="Rhea" id="RHEA-COMP:9685"/>
        <dbReference type="Rhea" id="RHEA-COMP:9690"/>
        <dbReference type="ChEBI" id="CHEBI:15377"/>
        <dbReference type="ChEBI" id="CHEBI:15378"/>
        <dbReference type="ChEBI" id="CHEBI:29999"/>
        <dbReference type="ChEBI" id="CHEBI:61723"/>
        <dbReference type="ChEBI" id="CHEBI:64479"/>
        <dbReference type="EC" id="3.1.4.14"/>
    </reaction>
</comment>
<comment type="similarity">
    <text evidence="1">Belongs to the AcpH family.</text>
</comment>
<organism>
    <name type="scientific">Escherichia coli (strain SMS-3-5 / SECEC)</name>
    <dbReference type="NCBI Taxonomy" id="439855"/>
    <lineage>
        <taxon>Bacteria</taxon>
        <taxon>Pseudomonadati</taxon>
        <taxon>Pseudomonadota</taxon>
        <taxon>Gammaproteobacteria</taxon>
        <taxon>Enterobacterales</taxon>
        <taxon>Enterobacteriaceae</taxon>
        <taxon>Escherichia</taxon>
    </lineage>
</organism>
<keyword id="KW-0275">Fatty acid biosynthesis</keyword>
<keyword id="KW-0276">Fatty acid metabolism</keyword>
<keyword id="KW-0378">Hydrolase</keyword>
<keyword id="KW-0444">Lipid biosynthesis</keyword>
<keyword id="KW-0443">Lipid metabolism</keyword>
<dbReference type="EC" id="3.1.4.14" evidence="1"/>
<dbReference type="EMBL" id="CP000970">
    <property type="protein sequence ID" value="ACB19976.1"/>
    <property type="molecule type" value="Genomic_DNA"/>
</dbReference>
<dbReference type="RefSeq" id="WP_001009885.1">
    <property type="nucleotide sequence ID" value="NC_010498.1"/>
</dbReference>
<dbReference type="SMR" id="B1LJF2"/>
<dbReference type="KEGG" id="ecm:EcSMS35_0436"/>
<dbReference type="HOGENOM" id="CLU_099370_1_0_6"/>
<dbReference type="Proteomes" id="UP000007011">
    <property type="component" value="Chromosome"/>
</dbReference>
<dbReference type="GO" id="GO:0008770">
    <property type="term" value="F:[acyl-carrier-protein] phosphodiesterase activity"/>
    <property type="evidence" value="ECO:0007669"/>
    <property type="project" value="UniProtKB-UniRule"/>
</dbReference>
<dbReference type="GO" id="GO:0006633">
    <property type="term" value="P:fatty acid biosynthetic process"/>
    <property type="evidence" value="ECO:0007669"/>
    <property type="project" value="UniProtKB-UniRule"/>
</dbReference>
<dbReference type="HAMAP" id="MF_01950">
    <property type="entry name" value="AcpH"/>
    <property type="match status" value="1"/>
</dbReference>
<dbReference type="InterPro" id="IPR007431">
    <property type="entry name" value="ACP_PD"/>
</dbReference>
<dbReference type="InterPro" id="IPR023491">
    <property type="entry name" value="ACP_phosphodiesterase_gpbac"/>
</dbReference>
<dbReference type="NCBIfam" id="NF007466">
    <property type="entry name" value="PRK10045.1"/>
    <property type="match status" value="1"/>
</dbReference>
<dbReference type="PANTHER" id="PTHR38764">
    <property type="entry name" value="ACYL CARRIER PROTEIN PHOSPHODIESTERASE"/>
    <property type="match status" value="1"/>
</dbReference>
<dbReference type="PANTHER" id="PTHR38764:SF1">
    <property type="entry name" value="ACYL CARRIER PROTEIN PHOSPHODIESTERASE"/>
    <property type="match status" value="1"/>
</dbReference>
<dbReference type="Pfam" id="PF04336">
    <property type="entry name" value="ACP_PD"/>
    <property type="match status" value="1"/>
</dbReference>
<dbReference type="PIRSF" id="PIRSF011489">
    <property type="entry name" value="DUF479"/>
    <property type="match status" value="1"/>
</dbReference>
<gene>
    <name evidence="1" type="primary">acpH</name>
    <name type="ordered locus">EcSMS35_0436</name>
</gene>
<accession>B1LJF2</accession>
<feature type="chain" id="PRO_1000188807" description="Acyl carrier protein phosphodiesterase">
    <location>
        <begin position="1"/>
        <end position="193"/>
    </location>
</feature>
<name>ACPH_ECOSM</name>
<evidence type="ECO:0000255" key="1">
    <source>
        <dbReference type="HAMAP-Rule" id="MF_01950"/>
    </source>
</evidence>
<sequence>MNFLAHLHLAHLAESSLSGNLLADFVRGNPEESFPPDVVAGIHMHRRIDVLTDNLPEVREAREWFRSETRRVAPITLDVMWDHFLSRHWSQLSPDFPLQEFVCYAREQVMTILPDSPPRFINLNNYLWSEQWLVRYRDMDFIQNVLNGMASRRPRLDALRDSWYDLDAHYDALETRFWQFYPRMMAQASRKAL</sequence>
<reference key="1">
    <citation type="journal article" date="2008" name="J. Bacteriol.">
        <title>Insights into the environmental resistance gene pool from the genome sequence of the multidrug-resistant environmental isolate Escherichia coli SMS-3-5.</title>
        <authorList>
            <person name="Fricke W.F."/>
            <person name="Wright M.S."/>
            <person name="Lindell A.H."/>
            <person name="Harkins D.M."/>
            <person name="Baker-Austin C."/>
            <person name="Ravel J."/>
            <person name="Stepanauskas R."/>
        </authorList>
    </citation>
    <scope>NUCLEOTIDE SEQUENCE [LARGE SCALE GENOMIC DNA]</scope>
    <source>
        <strain>SMS-3-5 / SECEC</strain>
    </source>
</reference>